<feature type="chain" id="PRO_1000185089" description="Adenine deaminase">
    <location>
        <begin position="1"/>
        <end position="565"/>
    </location>
</feature>
<keyword id="KW-0378">Hydrolase</keyword>
<keyword id="KW-0464">Manganese</keyword>
<keyword id="KW-1185">Reference proteome</keyword>
<organism>
    <name type="scientific">Methylobacterium nodulans (strain LMG 21967 / CNCM I-2342 / ORS 2060)</name>
    <dbReference type="NCBI Taxonomy" id="460265"/>
    <lineage>
        <taxon>Bacteria</taxon>
        <taxon>Pseudomonadati</taxon>
        <taxon>Pseudomonadota</taxon>
        <taxon>Alphaproteobacteria</taxon>
        <taxon>Hyphomicrobiales</taxon>
        <taxon>Methylobacteriaceae</taxon>
        <taxon>Methylobacterium</taxon>
    </lineage>
</organism>
<evidence type="ECO:0000255" key="1">
    <source>
        <dbReference type="HAMAP-Rule" id="MF_01518"/>
    </source>
</evidence>
<dbReference type="EC" id="3.5.4.2" evidence="1"/>
<dbReference type="EMBL" id="CP001349">
    <property type="protein sequence ID" value="ACL55427.1"/>
    <property type="molecule type" value="Genomic_DNA"/>
</dbReference>
<dbReference type="RefSeq" id="WP_015927138.1">
    <property type="nucleotide sequence ID" value="NC_011894.1"/>
</dbReference>
<dbReference type="SMR" id="B8IB34"/>
<dbReference type="STRING" id="460265.Mnod_0385"/>
<dbReference type="KEGG" id="mno:Mnod_0385"/>
<dbReference type="eggNOG" id="COG1001">
    <property type="taxonomic scope" value="Bacteria"/>
</dbReference>
<dbReference type="HOGENOM" id="CLU_027935_0_0_5"/>
<dbReference type="OrthoDB" id="9775607at2"/>
<dbReference type="Proteomes" id="UP000008207">
    <property type="component" value="Chromosome"/>
</dbReference>
<dbReference type="GO" id="GO:0000034">
    <property type="term" value="F:adenine deaminase activity"/>
    <property type="evidence" value="ECO:0007669"/>
    <property type="project" value="UniProtKB-UniRule"/>
</dbReference>
<dbReference type="GO" id="GO:0006146">
    <property type="term" value="P:adenine catabolic process"/>
    <property type="evidence" value="ECO:0007669"/>
    <property type="project" value="InterPro"/>
</dbReference>
<dbReference type="CDD" id="cd01295">
    <property type="entry name" value="AdeC"/>
    <property type="match status" value="1"/>
</dbReference>
<dbReference type="Gene3D" id="3.20.20.140">
    <property type="entry name" value="Metal-dependent hydrolases"/>
    <property type="match status" value="1"/>
</dbReference>
<dbReference type="Gene3D" id="2.30.40.10">
    <property type="entry name" value="Urease, subunit C, domain 1"/>
    <property type="match status" value="1"/>
</dbReference>
<dbReference type="HAMAP" id="MF_01518">
    <property type="entry name" value="Adenine_deamin"/>
    <property type="match status" value="1"/>
</dbReference>
<dbReference type="InterPro" id="IPR006679">
    <property type="entry name" value="Adenine_deam"/>
</dbReference>
<dbReference type="InterPro" id="IPR026912">
    <property type="entry name" value="Adenine_deam_C"/>
</dbReference>
<dbReference type="InterPro" id="IPR006680">
    <property type="entry name" value="Amidohydro-rel"/>
</dbReference>
<dbReference type="InterPro" id="IPR011059">
    <property type="entry name" value="Metal-dep_hydrolase_composite"/>
</dbReference>
<dbReference type="InterPro" id="IPR032466">
    <property type="entry name" value="Metal_Hydrolase"/>
</dbReference>
<dbReference type="NCBIfam" id="TIGR01178">
    <property type="entry name" value="ade"/>
    <property type="match status" value="1"/>
</dbReference>
<dbReference type="PANTHER" id="PTHR11113:SF2">
    <property type="entry name" value="ADENINE DEAMINASE"/>
    <property type="match status" value="1"/>
</dbReference>
<dbReference type="PANTHER" id="PTHR11113">
    <property type="entry name" value="N-ACETYLGLUCOSAMINE-6-PHOSPHATE DEACETYLASE"/>
    <property type="match status" value="1"/>
</dbReference>
<dbReference type="Pfam" id="PF13382">
    <property type="entry name" value="Adenine_deam_C"/>
    <property type="match status" value="1"/>
</dbReference>
<dbReference type="Pfam" id="PF01979">
    <property type="entry name" value="Amidohydro_1"/>
    <property type="match status" value="1"/>
</dbReference>
<dbReference type="SUPFAM" id="SSF51338">
    <property type="entry name" value="Composite domain of metallo-dependent hydrolases"/>
    <property type="match status" value="1"/>
</dbReference>
<dbReference type="SUPFAM" id="SSF51556">
    <property type="entry name" value="Metallo-dependent hydrolases"/>
    <property type="match status" value="1"/>
</dbReference>
<gene>
    <name evidence="1" type="primary">ade</name>
    <name type="ordered locus">Mnod_0385</name>
</gene>
<protein>
    <recommendedName>
        <fullName evidence="1">Adenine deaminase</fullName>
        <shortName evidence="1">Adenase</shortName>
        <shortName evidence="1">Adenine aminase</shortName>
        <ecNumber evidence="1">3.5.4.2</ecNumber>
    </recommendedName>
</protein>
<comment type="catalytic activity">
    <reaction evidence="1">
        <text>adenine + H2O + H(+) = hypoxanthine + NH4(+)</text>
        <dbReference type="Rhea" id="RHEA:23688"/>
        <dbReference type="ChEBI" id="CHEBI:15377"/>
        <dbReference type="ChEBI" id="CHEBI:15378"/>
        <dbReference type="ChEBI" id="CHEBI:16708"/>
        <dbReference type="ChEBI" id="CHEBI:17368"/>
        <dbReference type="ChEBI" id="CHEBI:28938"/>
        <dbReference type="EC" id="3.5.4.2"/>
    </reaction>
</comment>
<comment type="cofactor">
    <cofactor evidence="1">
        <name>Mn(2+)</name>
        <dbReference type="ChEBI" id="CHEBI:29035"/>
    </cofactor>
</comment>
<comment type="similarity">
    <text evidence="1">Belongs to the metallo-dependent hydrolases superfamily. Adenine deaminase family.</text>
</comment>
<proteinExistence type="inferred from homology"/>
<sequence length="565" mass="59016">MPAEIARRIAQGAGREPADLVIRGARLLDLVTGELVPTDIAVCGEVVVGTYGEYEGARVIEAASRIAVPGFIDTHLHIESSLITPHEFDRCVLPHGVTTAIWDPHELANVLGTAAFDYALQASTETAMDIRVQLSSCVPATDLESAGARIEAADLLPYRDHPRSLGIAEFMNFPGVVQADPGCLAKLAAFAGRHVDGHAPLLSGSGLNAYAAAGIRTDHEATGAAEALEKIRKGMTVLIREGSVSKDLAALAPLLTVATSPFLAFCTDDRNPLDIAEEGHLDHLIRTAIRLGVPPLAAYRAASLSAATAFGLTDRGMIAPGRRADIVLLDDLEACAVARVIAGGRAVEEALFAGRARTPAPGRGSVKAAPVAAEDFRIPGADGAETSVIGVVPGRIITEHRRLELPAANGCAGCDLDQDVVKVAVIARHGRPGMGRGFVQGFGLRRGAIASSVGHDSHNLCVVGADDADMAVAINRLIALQGGFVVAAGGTVLAELALPIAGLMSDLPFEAVRDALHPLREAARTLGCTLPEPFLQVAFLPLPVIPHLKITDRGLVDVDRMRLLG</sequence>
<reference key="1">
    <citation type="submission" date="2009-01" db="EMBL/GenBank/DDBJ databases">
        <title>Complete sequence of chromosome of Methylobacterium nodulans ORS 2060.</title>
        <authorList>
            <consortium name="US DOE Joint Genome Institute"/>
            <person name="Lucas S."/>
            <person name="Copeland A."/>
            <person name="Lapidus A."/>
            <person name="Glavina del Rio T."/>
            <person name="Dalin E."/>
            <person name="Tice H."/>
            <person name="Bruce D."/>
            <person name="Goodwin L."/>
            <person name="Pitluck S."/>
            <person name="Sims D."/>
            <person name="Brettin T."/>
            <person name="Detter J.C."/>
            <person name="Han C."/>
            <person name="Larimer F."/>
            <person name="Land M."/>
            <person name="Hauser L."/>
            <person name="Kyrpides N."/>
            <person name="Ivanova N."/>
            <person name="Marx C.J."/>
            <person name="Richardson P."/>
        </authorList>
    </citation>
    <scope>NUCLEOTIDE SEQUENCE [LARGE SCALE GENOMIC DNA]</scope>
    <source>
        <strain>LMG 21967 / CNCM I-2342 / ORS 2060</strain>
    </source>
</reference>
<accession>B8IB34</accession>
<name>ADEC_METNO</name>